<dbReference type="EC" id="5.6.2.4"/>
<dbReference type="EMBL" id="BX571856">
    <property type="protein sequence ID" value="CAG40982.1"/>
    <property type="molecule type" value="Genomic_DNA"/>
</dbReference>
<dbReference type="RefSeq" id="WP_000992926.1">
    <property type="nucleotide sequence ID" value="NC_002952.2"/>
</dbReference>
<dbReference type="SMR" id="Q6GFF2"/>
<dbReference type="KEGG" id="sar:SAR1997"/>
<dbReference type="HOGENOM" id="CLU_004585_5_2_9"/>
<dbReference type="Proteomes" id="UP000000596">
    <property type="component" value="Chromosome"/>
</dbReference>
<dbReference type="GO" id="GO:0005829">
    <property type="term" value="C:cytosol"/>
    <property type="evidence" value="ECO:0007669"/>
    <property type="project" value="TreeGrafter"/>
</dbReference>
<dbReference type="GO" id="GO:0033202">
    <property type="term" value="C:DNA helicase complex"/>
    <property type="evidence" value="ECO:0007669"/>
    <property type="project" value="TreeGrafter"/>
</dbReference>
<dbReference type="GO" id="GO:0043138">
    <property type="term" value="F:3'-5' DNA helicase activity"/>
    <property type="evidence" value="ECO:0007669"/>
    <property type="project" value="TreeGrafter"/>
</dbReference>
<dbReference type="GO" id="GO:0005524">
    <property type="term" value="F:ATP binding"/>
    <property type="evidence" value="ECO:0007669"/>
    <property type="project" value="UniProtKB-KW"/>
</dbReference>
<dbReference type="GO" id="GO:0016887">
    <property type="term" value="F:ATP hydrolysis activity"/>
    <property type="evidence" value="ECO:0007669"/>
    <property type="project" value="RHEA"/>
</dbReference>
<dbReference type="GO" id="GO:0003677">
    <property type="term" value="F:DNA binding"/>
    <property type="evidence" value="ECO:0007669"/>
    <property type="project" value="UniProtKB-KW"/>
</dbReference>
<dbReference type="GO" id="GO:0006260">
    <property type="term" value="P:DNA replication"/>
    <property type="evidence" value="ECO:0007669"/>
    <property type="project" value="InterPro"/>
</dbReference>
<dbReference type="GO" id="GO:0000725">
    <property type="term" value="P:recombinational repair"/>
    <property type="evidence" value="ECO:0007669"/>
    <property type="project" value="TreeGrafter"/>
</dbReference>
<dbReference type="CDD" id="cd17932">
    <property type="entry name" value="DEXQc_UvrD"/>
    <property type="match status" value="1"/>
</dbReference>
<dbReference type="CDD" id="cd18807">
    <property type="entry name" value="SF1_C_UvrD"/>
    <property type="match status" value="1"/>
</dbReference>
<dbReference type="FunFam" id="1.10.10.160:FF:000001">
    <property type="entry name" value="ATP-dependent DNA helicase"/>
    <property type="match status" value="1"/>
</dbReference>
<dbReference type="FunFam" id="1.10.486.10:FF:000003">
    <property type="entry name" value="ATP-dependent DNA helicase"/>
    <property type="match status" value="1"/>
</dbReference>
<dbReference type="Gene3D" id="1.10.10.160">
    <property type="match status" value="1"/>
</dbReference>
<dbReference type="Gene3D" id="3.40.50.300">
    <property type="entry name" value="P-loop containing nucleotide triphosphate hydrolases"/>
    <property type="match status" value="2"/>
</dbReference>
<dbReference type="Gene3D" id="1.10.486.10">
    <property type="entry name" value="PCRA, domain 4"/>
    <property type="match status" value="1"/>
</dbReference>
<dbReference type="InterPro" id="IPR005751">
    <property type="entry name" value="ATP-dep_DNA_helicase_PcrA"/>
</dbReference>
<dbReference type="InterPro" id="IPR013986">
    <property type="entry name" value="DExx_box_DNA_helicase_dom_sf"/>
</dbReference>
<dbReference type="InterPro" id="IPR014017">
    <property type="entry name" value="DNA_helicase_UvrD-like_C"/>
</dbReference>
<dbReference type="InterPro" id="IPR000212">
    <property type="entry name" value="DNA_helicase_UvrD/REP"/>
</dbReference>
<dbReference type="InterPro" id="IPR027417">
    <property type="entry name" value="P-loop_NTPase"/>
</dbReference>
<dbReference type="InterPro" id="IPR014016">
    <property type="entry name" value="UvrD-like_ATP-bd"/>
</dbReference>
<dbReference type="NCBIfam" id="TIGR01073">
    <property type="entry name" value="pcrA"/>
    <property type="match status" value="1"/>
</dbReference>
<dbReference type="PANTHER" id="PTHR11070:SF2">
    <property type="entry name" value="ATP-DEPENDENT DNA HELICASE SRS2"/>
    <property type="match status" value="1"/>
</dbReference>
<dbReference type="PANTHER" id="PTHR11070">
    <property type="entry name" value="UVRD / RECB / PCRA DNA HELICASE FAMILY MEMBER"/>
    <property type="match status" value="1"/>
</dbReference>
<dbReference type="Pfam" id="PF21196">
    <property type="entry name" value="PcrA_UvrD_tudor"/>
    <property type="match status" value="1"/>
</dbReference>
<dbReference type="Pfam" id="PF00580">
    <property type="entry name" value="UvrD-helicase"/>
    <property type="match status" value="1"/>
</dbReference>
<dbReference type="Pfam" id="PF13361">
    <property type="entry name" value="UvrD_C"/>
    <property type="match status" value="1"/>
</dbReference>
<dbReference type="SUPFAM" id="SSF52540">
    <property type="entry name" value="P-loop containing nucleoside triphosphate hydrolases"/>
    <property type="match status" value="1"/>
</dbReference>
<dbReference type="PROSITE" id="PS51198">
    <property type="entry name" value="UVRD_HELICASE_ATP_BIND"/>
    <property type="match status" value="1"/>
</dbReference>
<dbReference type="PROSITE" id="PS51217">
    <property type="entry name" value="UVRD_HELICASE_CTER"/>
    <property type="match status" value="1"/>
</dbReference>
<feature type="chain" id="PRO_0000102059" description="ATP-dependent DNA helicase PcrA">
    <location>
        <begin position="1"/>
        <end position="730"/>
    </location>
</feature>
<feature type="domain" description="UvrD-like helicase ATP-binding" evidence="2">
    <location>
        <begin position="6"/>
        <end position="285"/>
    </location>
</feature>
<feature type="domain" description="UvrD-like helicase C-terminal" evidence="3">
    <location>
        <begin position="286"/>
        <end position="560"/>
    </location>
</feature>
<feature type="region of interest" description="Disordered" evidence="4">
    <location>
        <begin position="641"/>
        <end position="678"/>
    </location>
</feature>
<feature type="compositionally biased region" description="Polar residues" evidence="4">
    <location>
        <begin position="641"/>
        <end position="651"/>
    </location>
</feature>
<feature type="compositionally biased region" description="Polar residues" evidence="4">
    <location>
        <begin position="663"/>
        <end position="678"/>
    </location>
</feature>
<feature type="binding site" evidence="2">
    <location>
        <begin position="30"/>
        <end position="35"/>
    </location>
    <ligand>
        <name>ATP</name>
        <dbReference type="ChEBI" id="CHEBI:30616"/>
    </ligand>
</feature>
<feature type="binding site" evidence="1">
    <location>
        <position position="283"/>
    </location>
    <ligand>
        <name>ATP</name>
        <dbReference type="ChEBI" id="CHEBI:30616"/>
    </ligand>
</feature>
<comment type="function">
    <text evidence="1">Essential helicase.</text>
</comment>
<comment type="catalytic activity">
    <reaction>
        <text>Couples ATP hydrolysis with the unwinding of duplex DNA by translocating in the 3'-5' direction.</text>
        <dbReference type="EC" id="5.6.2.4"/>
    </reaction>
</comment>
<comment type="catalytic activity">
    <reaction>
        <text>ATP + H2O = ADP + phosphate + H(+)</text>
        <dbReference type="Rhea" id="RHEA:13065"/>
        <dbReference type="ChEBI" id="CHEBI:15377"/>
        <dbReference type="ChEBI" id="CHEBI:15378"/>
        <dbReference type="ChEBI" id="CHEBI:30616"/>
        <dbReference type="ChEBI" id="CHEBI:43474"/>
        <dbReference type="ChEBI" id="CHEBI:456216"/>
        <dbReference type="EC" id="5.6.2.4"/>
    </reaction>
</comment>
<comment type="similarity">
    <text evidence="5">Belongs to the helicase family. UvrD subfamily.</text>
</comment>
<protein>
    <recommendedName>
        <fullName>ATP-dependent DNA helicase PcrA</fullName>
        <ecNumber>5.6.2.4</ecNumber>
    </recommendedName>
    <alternativeName>
        <fullName evidence="5">DNA 3'-5' helicase PcrA</fullName>
    </alternativeName>
</protein>
<reference key="1">
    <citation type="journal article" date="2004" name="Proc. Natl. Acad. Sci. U.S.A.">
        <title>Complete genomes of two clinical Staphylococcus aureus strains: evidence for the rapid evolution of virulence and drug resistance.</title>
        <authorList>
            <person name="Holden M.T.G."/>
            <person name="Feil E.J."/>
            <person name="Lindsay J.A."/>
            <person name="Peacock S.J."/>
            <person name="Day N.P.J."/>
            <person name="Enright M.C."/>
            <person name="Foster T.J."/>
            <person name="Moore C.E."/>
            <person name="Hurst L."/>
            <person name="Atkin R."/>
            <person name="Barron A."/>
            <person name="Bason N."/>
            <person name="Bentley S.D."/>
            <person name="Chillingworth C."/>
            <person name="Chillingworth T."/>
            <person name="Churcher C."/>
            <person name="Clark L."/>
            <person name="Corton C."/>
            <person name="Cronin A."/>
            <person name="Doggett J."/>
            <person name="Dowd L."/>
            <person name="Feltwell T."/>
            <person name="Hance Z."/>
            <person name="Harris B."/>
            <person name="Hauser H."/>
            <person name="Holroyd S."/>
            <person name="Jagels K."/>
            <person name="James K.D."/>
            <person name="Lennard N."/>
            <person name="Line A."/>
            <person name="Mayes R."/>
            <person name="Moule S."/>
            <person name="Mungall K."/>
            <person name="Ormond D."/>
            <person name="Quail M.A."/>
            <person name="Rabbinowitsch E."/>
            <person name="Rutherford K.M."/>
            <person name="Sanders M."/>
            <person name="Sharp S."/>
            <person name="Simmonds M."/>
            <person name="Stevens K."/>
            <person name="Whitehead S."/>
            <person name="Barrell B.G."/>
            <person name="Spratt B.G."/>
            <person name="Parkhill J."/>
        </authorList>
    </citation>
    <scope>NUCLEOTIDE SEQUENCE [LARGE SCALE GENOMIC DNA]</scope>
    <source>
        <strain>MRSA252</strain>
    </source>
</reference>
<accession>Q6GFF2</accession>
<name>PCRA_STAAR</name>
<organism>
    <name type="scientific">Staphylococcus aureus (strain MRSA252)</name>
    <dbReference type="NCBI Taxonomy" id="282458"/>
    <lineage>
        <taxon>Bacteria</taxon>
        <taxon>Bacillati</taxon>
        <taxon>Bacillota</taxon>
        <taxon>Bacilli</taxon>
        <taxon>Bacillales</taxon>
        <taxon>Staphylococcaceae</taxon>
        <taxon>Staphylococcus</taxon>
    </lineage>
</organism>
<sequence>MNALLNHMNTEQSEAVKTTEGPLLIMAGAGSGKTRVLTHRIAYLLDEKDVSPYNVLAITFTNKAAREMKERVQKLVGDQAEVIWMSTFHSMCVRILRRDADRIGIERNFTIIDPTDQKSVIKDVLKNENIDSKKFEPRMFIGAISNLKNELKTPADAQKEATDYHSQMVATVYSGYQRQLSRNEALDFDDLIMTTINLFERVPEVLEYYQNKFQYIHVDEYQDTNKAQYTLVKLLASKFKNLCVVGDSDQSIYGWRGADIQNILSFEKDYPEANTIFLEQNYRSTKTILNAANEVIKNNSERKPKGLWTANTNGEKIHYYEAMTERDEAEFVIREIMKHQRNGKKYQDMAILYRTNAQSRVLEETFMKSNMPYTMVGGQKFYDRKEIKDLLSYLRIIANSNDDISLQRIINVPKRGVGPSSVEKVQNYALQNNISMFDALGEADFIGLSKKVTQECLNFYELIQSLIKEQEFLEIHEIVDEVLQKSGYREMLERENTLESRSRLENIDEFMSVPKDYEENTPLEEQSLINFLTDLSLVADIDEADTENGVTLMTMHSAKGLEFPIVFIMGMEESLFPHIRAIKSEGDHEMQEERRICYVAITRAEEVLYITHATSRMLFGRPQSNMPSRFLKEIPESLLENHSSGKRQTIQPKAKPFAKRGFSQRTTSTKKQVSSSDWNVGDKVMHKAWGEGMVSNVNEKNGSIELDIIFKSQGPKRLLAQFAPIEKKED</sequence>
<keyword id="KW-0067">ATP-binding</keyword>
<keyword id="KW-0238">DNA-binding</keyword>
<keyword id="KW-0347">Helicase</keyword>
<keyword id="KW-0378">Hydrolase</keyword>
<keyword id="KW-0413">Isomerase</keyword>
<keyword id="KW-0547">Nucleotide-binding</keyword>
<evidence type="ECO:0000250" key="1"/>
<evidence type="ECO:0000255" key="2">
    <source>
        <dbReference type="PROSITE-ProRule" id="PRU00560"/>
    </source>
</evidence>
<evidence type="ECO:0000255" key="3">
    <source>
        <dbReference type="PROSITE-ProRule" id="PRU00617"/>
    </source>
</evidence>
<evidence type="ECO:0000256" key="4">
    <source>
        <dbReference type="SAM" id="MobiDB-lite"/>
    </source>
</evidence>
<evidence type="ECO:0000305" key="5"/>
<gene>
    <name type="primary">pcrA</name>
    <name type="ordered locus">SAR1997</name>
</gene>
<proteinExistence type="inferred from homology"/>